<name>SCP52_ARATH</name>
<feature type="signal peptide" evidence="1">
    <location>
        <begin position="1"/>
        <end position="22"/>
    </location>
</feature>
<feature type="chain" id="PRO_0000274666" description="Putative serine carboxypeptidase-like 52">
    <location>
        <begin position="23"/>
        <end position="184"/>
    </location>
</feature>
<feature type="glycosylation site" description="N-linked (GlcNAc...) asparagine" evidence="1">
    <location>
        <position position="93"/>
    </location>
</feature>
<reference key="1">
    <citation type="journal article" date="1999" name="Nature">
        <title>Sequence and analysis of chromosome 2 of the plant Arabidopsis thaliana.</title>
        <authorList>
            <person name="Lin X."/>
            <person name="Kaul S."/>
            <person name="Rounsley S.D."/>
            <person name="Shea T.P."/>
            <person name="Benito M.-I."/>
            <person name="Town C.D."/>
            <person name="Fujii C.Y."/>
            <person name="Mason T.M."/>
            <person name="Bowman C.L."/>
            <person name="Barnstead M.E."/>
            <person name="Feldblyum T.V."/>
            <person name="Buell C.R."/>
            <person name="Ketchum K.A."/>
            <person name="Lee J.J."/>
            <person name="Ronning C.M."/>
            <person name="Koo H.L."/>
            <person name="Moffat K.S."/>
            <person name="Cronin L.A."/>
            <person name="Shen M."/>
            <person name="Pai G."/>
            <person name="Van Aken S."/>
            <person name="Umayam L."/>
            <person name="Tallon L.J."/>
            <person name="Gill J.E."/>
            <person name="Adams M.D."/>
            <person name="Carrera A.J."/>
            <person name="Creasy T.H."/>
            <person name="Goodman H.M."/>
            <person name="Somerville C.R."/>
            <person name="Copenhaver G.P."/>
            <person name="Preuss D."/>
            <person name="Nierman W.C."/>
            <person name="White O."/>
            <person name="Eisen J.A."/>
            <person name="Salzberg S.L."/>
            <person name="Fraser C.M."/>
            <person name="Venter J.C."/>
        </authorList>
    </citation>
    <scope>NUCLEOTIDE SEQUENCE [LARGE SCALE GENOMIC DNA]</scope>
    <source>
        <strain>cv. Columbia</strain>
    </source>
</reference>
<reference key="2">
    <citation type="journal article" date="2017" name="Plant J.">
        <title>Araport11: a complete reannotation of the Arabidopsis thaliana reference genome.</title>
        <authorList>
            <person name="Cheng C.Y."/>
            <person name="Krishnakumar V."/>
            <person name="Chan A.P."/>
            <person name="Thibaud-Nissen F."/>
            <person name="Schobel S."/>
            <person name="Town C.D."/>
        </authorList>
    </citation>
    <scope>GENOME REANNOTATION</scope>
    <source>
        <strain>cv. Columbia</strain>
    </source>
</reference>
<reference key="3">
    <citation type="journal article" date="2005" name="Plant Physiol.">
        <title>An expression and bioinformatics analysis of the Arabidopsis serine carboxypeptidase-like gene family.</title>
        <authorList>
            <person name="Fraser C.M."/>
            <person name="Rider L.W."/>
            <person name="Chapple C."/>
        </authorList>
    </citation>
    <scope>GENE FAMILY</scope>
    <scope>NOMENCLATURE</scope>
</reference>
<proteinExistence type="uncertain"/>
<protein>
    <recommendedName>
        <fullName>Putative serine carboxypeptidase-like 52</fullName>
    </recommendedName>
</protein>
<gene>
    <name type="primary">SCPL52</name>
    <name type="ordered locus">At2g22960</name>
    <name type="ORF">F21P24.2</name>
    <name type="ORF">T20K9.21</name>
</gene>
<accession>Q8S8P0</accession>
<accession>Q8S8R2</accession>
<sequence>MRTFSPKLLLLLLLVLRHHAESGSIVKFLPGFEGPLPFELETGYIGIAKYWANDERVREALQIRKGSIGKWIRCNSNIHYDDDIISSIPYHMNNSINGYRSLIYSGDHDMEVPFLATEAWIRSLNYPIIDDWRPWIINNQIAGYTMTYANKMTYATIKASGHTAEYKPAESFIMFQRWISGQPL</sequence>
<dbReference type="EMBL" id="AC004401">
    <property type="protein sequence ID" value="AAM14928.1"/>
    <property type="status" value="ALT_SEQ"/>
    <property type="molecule type" value="Genomic_DNA"/>
</dbReference>
<dbReference type="EMBL" id="AC004786">
    <property type="protein sequence ID" value="AAM15004.1"/>
    <property type="molecule type" value="Genomic_DNA"/>
</dbReference>
<dbReference type="EMBL" id="CP002685">
    <property type="status" value="NOT_ANNOTATED_CDS"/>
    <property type="molecule type" value="Genomic_DNA"/>
</dbReference>
<dbReference type="SMR" id="Q8S8P0"/>
<dbReference type="STRING" id="3702.Q8S8P0"/>
<dbReference type="MEROPS" id="S10.A47"/>
<dbReference type="GlyCosmos" id="Q8S8P0">
    <property type="glycosylation" value="1 site, No reported glycans"/>
</dbReference>
<dbReference type="GlyGen" id="Q8S8P0">
    <property type="glycosylation" value="1 site"/>
</dbReference>
<dbReference type="PaxDb" id="3702-AT2G22960.1"/>
<dbReference type="Araport" id="AT2G22960"/>
<dbReference type="TAIR" id="AT2G22960">
    <property type="gene designation" value="FPT2"/>
</dbReference>
<dbReference type="eggNOG" id="KOG1282">
    <property type="taxonomic scope" value="Eukaryota"/>
</dbReference>
<dbReference type="HOGENOM" id="CLU_008523_6_0_1"/>
<dbReference type="InParanoid" id="Q8S8P0"/>
<dbReference type="PhylomeDB" id="Q8S8P0"/>
<dbReference type="BioCyc" id="ARA:AT2G22960-MONOMER"/>
<dbReference type="Proteomes" id="UP000006548">
    <property type="component" value="Chromosome 2"/>
</dbReference>
<dbReference type="ExpressionAtlas" id="Q8S8P0">
    <property type="expression patterns" value="baseline and differential"/>
</dbReference>
<dbReference type="GO" id="GO:0005576">
    <property type="term" value="C:extracellular region"/>
    <property type="evidence" value="ECO:0007669"/>
    <property type="project" value="UniProtKB-SubCell"/>
</dbReference>
<dbReference type="GO" id="GO:0004185">
    <property type="term" value="F:serine-type carboxypeptidase activity"/>
    <property type="evidence" value="ECO:0007669"/>
    <property type="project" value="InterPro"/>
</dbReference>
<dbReference type="GO" id="GO:0071493">
    <property type="term" value="P:cellular response to UV-B"/>
    <property type="evidence" value="ECO:0000315"/>
    <property type="project" value="TAIR"/>
</dbReference>
<dbReference type="GO" id="GO:0051555">
    <property type="term" value="P:flavonol biosynthetic process"/>
    <property type="evidence" value="ECO:0000315"/>
    <property type="project" value="TAIR"/>
</dbReference>
<dbReference type="GO" id="GO:0006508">
    <property type="term" value="P:proteolysis"/>
    <property type="evidence" value="ECO:0007669"/>
    <property type="project" value="InterPro"/>
</dbReference>
<dbReference type="FunFam" id="3.40.50.12670:FF:000001">
    <property type="entry name" value="Carboxypeptidase"/>
    <property type="match status" value="1"/>
</dbReference>
<dbReference type="FunFam" id="3.40.50.1820:FF:000796">
    <property type="entry name" value="Putative serine carboxypeptidase-like 52"/>
    <property type="match status" value="1"/>
</dbReference>
<dbReference type="Gene3D" id="3.40.50.1820">
    <property type="entry name" value="alpha/beta hydrolase"/>
    <property type="match status" value="1"/>
</dbReference>
<dbReference type="InterPro" id="IPR029058">
    <property type="entry name" value="AB_hydrolase_fold"/>
</dbReference>
<dbReference type="InterPro" id="IPR001563">
    <property type="entry name" value="Peptidase_S10"/>
</dbReference>
<dbReference type="PANTHER" id="PTHR11802:SF361">
    <property type="entry name" value="SERINE CARBOXYPEPTIDASE-LIKE 11-RELATED"/>
    <property type="match status" value="1"/>
</dbReference>
<dbReference type="PANTHER" id="PTHR11802">
    <property type="entry name" value="SERINE PROTEASE FAMILY S10 SERINE CARBOXYPEPTIDASE"/>
    <property type="match status" value="1"/>
</dbReference>
<dbReference type="Pfam" id="PF00450">
    <property type="entry name" value="Peptidase_S10"/>
    <property type="match status" value="1"/>
</dbReference>
<dbReference type="SUPFAM" id="SSF53474">
    <property type="entry name" value="alpha/beta-Hydrolases"/>
    <property type="match status" value="1"/>
</dbReference>
<keyword id="KW-0325">Glycoprotein</keyword>
<keyword id="KW-1185">Reference proteome</keyword>
<keyword id="KW-0964">Secreted</keyword>
<keyword id="KW-0732">Signal</keyword>
<evidence type="ECO:0000255" key="1"/>
<evidence type="ECO:0000305" key="2"/>
<organism>
    <name type="scientific">Arabidopsis thaliana</name>
    <name type="common">Mouse-ear cress</name>
    <dbReference type="NCBI Taxonomy" id="3702"/>
    <lineage>
        <taxon>Eukaryota</taxon>
        <taxon>Viridiplantae</taxon>
        <taxon>Streptophyta</taxon>
        <taxon>Embryophyta</taxon>
        <taxon>Tracheophyta</taxon>
        <taxon>Spermatophyta</taxon>
        <taxon>Magnoliopsida</taxon>
        <taxon>eudicotyledons</taxon>
        <taxon>Gunneridae</taxon>
        <taxon>Pentapetalae</taxon>
        <taxon>rosids</taxon>
        <taxon>malvids</taxon>
        <taxon>Brassicales</taxon>
        <taxon>Brassicaceae</taxon>
        <taxon>Camelineae</taxon>
        <taxon>Arabidopsis</taxon>
    </lineage>
</organism>
<comment type="subcellular location">
    <subcellularLocation>
        <location evidence="2">Secreted</location>
    </subcellularLocation>
</comment>
<comment type="similarity">
    <text evidence="2">Belongs to the peptidase S10 family.</text>
</comment>
<comment type="caution">
    <text evidence="2">Lacks the first part of the protein and the active site Ser residue which is a conserved feature of peptidase S10 family.</text>
</comment>
<comment type="caution">
    <text evidence="2">Could be the product of a pseudogene.</text>
</comment>
<comment type="sequence caution" evidence="2">
    <conflict type="erroneous gene model prediction">
        <sequence resource="EMBL-CDS" id="AAM14928"/>
    </conflict>
</comment>